<reference key="1">
    <citation type="journal article" date="1995" name="Nucleic Acids Res.">
        <title>Analysis of the Escherichia coli genome VI: DNA sequence of the region from 92.8 through 100 minutes.</title>
        <authorList>
            <person name="Burland V.D."/>
            <person name="Plunkett G. III"/>
            <person name="Sofia H.J."/>
            <person name="Daniels D.L."/>
            <person name="Blattner F.R."/>
        </authorList>
    </citation>
    <scope>NUCLEOTIDE SEQUENCE [LARGE SCALE GENOMIC DNA]</scope>
    <source>
        <strain>K12 / MG1655 / ATCC 47076</strain>
    </source>
</reference>
<reference key="2">
    <citation type="journal article" date="1997" name="Science">
        <title>The complete genome sequence of Escherichia coli K-12.</title>
        <authorList>
            <person name="Blattner F.R."/>
            <person name="Plunkett G. III"/>
            <person name="Bloch C.A."/>
            <person name="Perna N.T."/>
            <person name="Burland V."/>
            <person name="Riley M."/>
            <person name="Collado-Vides J."/>
            <person name="Glasner J.D."/>
            <person name="Rode C.K."/>
            <person name="Mayhew G.F."/>
            <person name="Gregor J."/>
            <person name="Davis N.W."/>
            <person name="Kirkpatrick H.A."/>
            <person name="Goeden M.A."/>
            <person name="Rose D.J."/>
            <person name="Mau B."/>
            <person name="Shao Y."/>
        </authorList>
    </citation>
    <scope>NUCLEOTIDE SEQUENCE [LARGE SCALE GENOMIC DNA]</scope>
    <source>
        <strain>K12 / MG1655 / ATCC 47076</strain>
    </source>
</reference>
<reference key="3">
    <citation type="journal article" date="2006" name="Mol. Syst. Biol.">
        <title>Highly accurate genome sequences of Escherichia coli K-12 strains MG1655 and W3110.</title>
        <authorList>
            <person name="Hayashi K."/>
            <person name="Morooka N."/>
            <person name="Yamamoto Y."/>
            <person name="Fujita K."/>
            <person name="Isono K."/>
            <person name="Choi S."/>
            <person name="Ohtsubo E."/>
            <person name="Baba T."/>
            <person name="Wanner B.L."/>
            <person name="Mori H."/>
            <person name="Horiuchi T."/>
        </authorList>
    </citation>
    <scope>NUCLEOTIDE SEQUENCE [LARGE SCALE GENOMIC DNA]</scope>
    <source>
        <strain>K12 / W3110 / ATCC 27325 / DSM 5911</strain>
    </source>
</reference>
<reference key="4">
    <citation type="journal article" date="1998" name="J. Bacteriol.">
        <title>Fumarate regulation of gene expression in Escherichia coli by the DcuSR (dcuSR genes) two-component regulatory system.</title>
        <authorList>
            <person name="Zientz E."/>
            <person name="Bongaerts J."/>
            <person name="Unden G."/>
        </authorList>
    </citation>
    <scope>CHARACTERIZATION</scope>
    <source>
        <strain>K12 / MC4100 / ATCC 35695 / DSM 6574</strain>
    </source>
</reference>
<reference key="5">
    <citation type="journal article" date="2002" name="J. Biol. Chem.">
        <title>Function of DcuS from Escherichia coli as a fumarate-stimulated histidine protein kinase in vitro.</title>
        <authorList>
            <person name="Janausch I.G."/>
            <person name="Garcia-Moreno I."/>
            <person name="Unden G."/>
        </authorList>
    </citation>
    <scope>CHARACTERIZATION</scope>
    <source>
        <strain>K12 / AN387</strain>
    </source>
</reference>
<keyword id="KW-0010">Activator</keyword>
<keyword id="KW-0963">Cytoplasm</keyword>
<keyword id="KW-0238">DNA-binding</keyword>
<keyword id="KW-0597">Phosphoprotein</keyword>
<keyword id="KW-1185">Reference proteome</keyword>
<keyword id="KW-0804">Transcription</keyword>
<keyword id="KW-0805">Transcription regulation</keyword>
<keyword id="KW-0902">Two-component regulatory system</keyword>
<proteinExistence type="evidence at protein level"/>
<protein>
    <recommendedName>
        <fullName>Transcriptional regulatory protein DcuR</fullName>
    </recommendedName>
</protein>
<feature type="chain" id="PRO_0000081094" description="Transcriptional regulatory protein DcuR">
    <location>
        <begin position="1"/>
        <end position="239"/>
    </location>
</feature>
<feature type="domain" description="Response regulatory" evidence="2">
    <location>
        <begin position="3"/>
        <end position="121"/>
    </location>
</feature>
<feature type="DNA-binding region" description="H-T-H motif" evidence="1">
    <location>
        <begin position="181"/>
        <end position="200"/>
    </location>
</feature>
<feature type="modified residue" description="4-aspartylphosphate" evidence="2">
    <location>
        <position position="56"/>
    </location>
</feature>
<evidence type="ECO:0000250" key="1"/>
<evidence type="ECO:0000255" key="2">
    <source>
        <dbReference type="PROSITE-ProRule" id="PRU00169"/>
    </source>
</evidence>
<evidence type="ECO:0000305" key="3"/>
<organism>
    <name type="scientific">Escherichia coli (strain K12)</name>
    <dbReference type="NCBI Taxonomy" id="83333"/>
    <lineage>
        <taxon>Bacteria</taxon>
        <taxon>Pseudomonadati</taxon>
        <taxon>Pseudomonadota</taxon>
        <taxon>Gammaproteobacteria</taxon>
        <taxon>Enterobacterales</taxon>
        <taxon>Enterobacteriaceae</taxon>
        <taxon>Escherichia</taxon>
    </lineage>
</organism>
<comment type="function">
    <text>Member of the two-component regulatory system DcuR/DcuS. Involved in the C4-dicarboxylate-stimulated regulation of the genes encoding the anaerobic fumarate respiratory system (frdABCD; nuoAN; dcuB; dcuC; sdhCDAB; etc.). Weakly regulates the aerobic C4-dicarboxylate transporter dctA.</text>
</comment>
<comment type="subcellular location">
    <subcellularLocation>
        <location evidence="3">Cytoplasm</location>
    </subcellularLocation>
</comment>
<comment type="PTM">
    <text>Phosphorylated and activated by DcuS.</text>
</comment>
<gene>
    <name type="primary">dcuR</name>
    <name type="synonym">yjdG</name>
    <name type="ordered locus">b4124</name>
    <name type="ordered locus">JW4085</name>
</gene>
<name>DCUR_ECOLI</name>
<dbReference type="EMBL" id="U14003">
    <property type="protein sequence ID" value="AAA97024.1"/>
    <property type="molecule type" value="Genomic_DNA"/>
</dbReference>
<dbReference type="EMBL" id="U00096">
    <property type="protein sequence ID" value="AAC77085.1"/>
    <property type="molecule type" value="Genomic_DNA"/>
</dbReference>
<dbReference type="EMBL" id="AP009048">
    <property type="protein sequence ID" value="BAE78126.1"/>
    <property type="molecule type" value="Genomic_DNA"/>
</dbReference>
<dbReference type="PIR" id="C65222">
    <property type="entry name" value="C65222"/>
</dbReference>
<dbReference type="RefSeq" id="NP_418548.1">
    <property type="nucleotide sequence ID" value="NC_000913.3"/>
</dbReference>
<dbReference type="RefSeq" id="WP_000611288.1">
    <property type="nucleotide sequence ID" value="NZ_STEB01000014.1"/>
</dbReference>
<dbReference type="SMR" id="P0AD01"/>
<dbReference type="BioGRID" id="4261980">
    <property type="interactions" value="106"/>
</dbReference>
<dbReference type="BioGRID" id="852932">
    <property type="interactions" value="1"/>
</dbReference>
<dbReference type="DIP" id="DIP-48032N"/>
<dbReference type="FunCoup" id="P0AD01">
    <property type="interactions" value="241"/>
</dbReference>
<dbReference type="IntAct" id="P0AD01">
    <property type="interactions" value="4"/>
</dbReference>
<dbReference type="STRING" id="511145.b4124"/>
<dbReference type="iPTMnet" id="P0AD01"/>
<dbReference type="jPOST" id="P0AD01"/>
<dbReference type="PaxDb" id="511145-b4124"/>
<dbReference type="EnsemblBacteria" id="AAC77085">
    <property type="protein sequence ID" value="AAC77085"/>
    <property type="gene ID" value="b4124"/>
</dbReference>
<dbReference type="GeneID" id="75203994"/>
<dbReference type="GeneID" id="948640"/>
<dbReference type="KEGG" id="ecj:JW4085"/>
<dbReference type="KEGG" id="eco:b4124"/>
<dbReference type="KEGG" id="ecoc:C3026_22290"/>
<dbReference type="PATRIC" id="fig|1411691.4.peg.2576"/>
<dbReference type="EchoBASE" id="EB2357"/>
<dbReference type="eggNOG" id="COG4565">
    <property type="taxonomic scope" value="Bacteria"/>
</dbReference>
<dbReference type="HOGENOM" id="CLU_000445_39_0_6"/>
<dbReference type="InParanoid" id="P0AD01"/>
<dbReference type="OMA" id="ADAHVMY"/>
<dbReference type="OrthoDB" id="9796655at2"/>
<dbReference type="PhylomeDB" id="P0AD01"/>
<dbReference type="BioCyc" id="EcoCyc:DCUR-MONOMER"/>
<dbReference type="PRO" id="PR:P0AD01"/>
<dbReference type="Proteomes" id="UP000000625">
    <property type="component" value="Chromosome"/>
</dbReference>
<dbReference type="GO" id="GO:0005737">
    <property type="term" value="C:cytoplasm"/>
    <property type="evidence" value="ECO:0007669"/>
    <property type="project" value="UniProtKB-SubCell"/>
</dbReference>
<dbReference type="GO" id="GO:0003677">
    <property type="term" value="F:DNA binding"/>
    <property type="evidence" value="ECO:0000314"/>
    <property type="project" value="EcoliWiki"/>
</dbReference>
<dbReference type="GO" id="GO:0001216">
    <property type="term" value="F:DNA-binding transcription activator activity"/>
    <property type="evidence" value="ECO:0000314"/>
    <property type="project" value="EcoCyc"/>
</dbReference>
<dbReference type="GO" id="GO:0000156">
    <property type="term" value="F:phosphorelay response regulator activity"/>
    <property type="evidence" value="ECO:0000318"/>
    <property type="project" value="GO_Central"/>
</dbReference>
<dbReference type="GO" id="GO:0042803">
    <property type="term" value="F:protein homodimerization activity"/>
    <property type="evidence" value="ECO:0000314"/>
    <property type="project" value="EcoCyc"/>
</dbReference>
<dbReference type="GO" id="GO:0006351">
    <property type="term" value="P:DNA-templated transcription"/>
    <property type="evidence" value="ECO:0000270"/>
    <property type="project" value="EcoCyc"/>
</dbReference>
<dbReference type="GO" id="GO:0000160">
    <property type="term" value="P:phosphorelay signal transduction system"/>
    <property type="evidence" value="ECO:0000314"/>
    <property type="project" value="EcoCyc"/>
</dbReference>
<dbReference type="GO" id="GO:0045893">
    <property type="term" value="P:positive regulation of DNA-templated transcription"/>
    <property type="evidence" value="ECO:0000315"/>
    <property type="project" value="EcoCyc"/>
</dbReference>
<dbReference type="CDD" id="cd19925">
    <property type="entry name" value="REC_citrate_TCS"/>
    <property type="match status" value="1"/>
</dbReference>
<dbReference type="Gene3D" id="3.40.50.2300">
    <property type="match status" value="1"/>
</dbReference>
<dbReference type="InterPro" id="IPR051271">
    <property type="entry name" value="2C-system_Tx_regulators"/>
</dbReference>
<dbReference type="InterPro" id="IPR011006">
    <property type="entry name" value="CheY-like_superfamily"/>
</dbReference>
<dbReference type="InterPro" id="IPR024187">
    <property type="entry name" value="Sig_transdc_resp-reg_cit/mal"/>
</dbReference>
<dbReference type="InterPro" id="IPR001789">
    <property type="entry name" value="Sig_transdc_resp-reg_receiver"/>
</dbReference>
<dbReference type="NCBIfam" id="NF007750">
    <property type="entry name" value="PRK10430.1"/>
    <property type="match status" value="1"/>
</dbReference>
<dbReference type="PANTHER" id="PTHR45526:SF1">
    <property type="entry name" value="TRANSCRIPTIONAL REGULATORY PROTEIN DCUR-RELATED"/>
    <property type="match status" value="1"/>
</dbReference>
<dbReference type="PANTHER" id="PTHR45526">
    <property type="entry name" value="TRANSCRIPTIONAL REGULATORY PROTEIN DPIA"/>
    <property type="match status" value="1"/>
</dbReference>
<dbReference type="Pfam" id="PF00072">
    <property type="entry name" value="Response_reg"/>
    <property type="match status" value="1"/>
</dbReference>
<dbReference type="PIRSF" id="PIRSF006171">
    <property type="entry name" value="RR_citrat_malat"/>
    <property type="match status" value="1"/>
</dbReference>
<dbReference type="SMART" id="SM00448">
    <property type="entry name" value="REC"/>
    <property type="match status" value="1"/>
</dbReference>
<dbReference type="SUPFAM" id="SSF52172">
    <property type="entry name" value="CheY-like"/>
    <property type="match status" value="1"/>
</dbReference>
<dbReference type="PROSITE" id="PS50110">
    <property type="entry name" value="RESPONSE_REGULATORY"/>
    <property type="match status" value="1"/>
</dbReference>
<sequence>MINVLIIDDDAMVAELNRRYVAQIPGFQCCGTASTLEKAKEIIFNSDTPIDLILLDIYMQKENGLDLLPVLHNARCKSDVIVISSAADAATIKDSLHYGVVDYLIKPFQASRFEEALTGWRQKKMALEKHQYYDQAELDQLIHGSSSNEQDPRRLPKGLTPQTLRTLCQWIDAHQDYEFSTDELANEVNISRVSCRKYLIWLVNCHILFTSIHYGVTGRPVYRYRIQAEHYSLLKQYCQ</sequence>
<accession>P0AD01</accession>
<accession>P39271</accession>
<accession>P76794</accession>
<accession>Q2M6I0</accession>